<proteinExistence type="evidence at transcript level"/>
<name>GOLS6_ARATH</name>
<evidence type="ECO:0000250" key="1"/>
<evidence type="ECO:0000305" key="2"/>
<dbReference type="EC" id="2.4.1.123"/>
<dbReference type="EMBL" id="AL049171">
    <property type="protein sequence ID" value="CAB38954.1"/>
    <property type="status" value="ALT_SEQ"/>
    <property type="molecule type" value="Genomic_DNA"/>
</dbReference>
<dbReference type="EMBL" id="AL161564">
    <property type="protein sequence ID" value="CAB79480.1"/>
    <property type="status" value="ALT_SEQ"/>
    <property type="molecule type" value="Genomic_DNA"/>
</dbReference>
<dbReference type="EMBL" id="CP002687">
    <property type="protein sequence ID" value="AEE85175.1"/>
    <property type="molecule type" value="Genomic_DNA"/>
</dbReference>
<dbReference type="EMBL" id="AY142500">
    <property type="protein sequence ID" value="AAN13051.1"/>
    <property type="molecule type" value="mRNA"/>
</dbReference>
<dbReference type="PIR" id="T06009">
    <property type="entry name" value="T06009"/>
</dbReference>
<dbReference type="RefSeq" id="NP_567741.2">
    <property type="nucleotide sequence ID" value="NM_118758.3"/>
</dbReference>
<dbReference type="SMR" id="Q8H1S1"/>
<dbReference type="FunCoup" id="Q8H1S1">
    <property type="interactions" value="211"/>
</dbReference>
<dbReference type="STRING" id="3702.Q8H1S1"/>
<dbReference type="CAZy" id="GT8">
    <property type="family name" value="Glycosyltransferase Family 8"/>
</dbReference>
<dbReference type="PaxDb" id="3702-AT4G26250.1"/>
<dbReference type="EnsemblPlants" id="AT4G26250.1">
    <property type="protein sequence ID" value="AT4G26250.1"/>
    <property type="gene ID" value="AT4G26250"/>
</dbReference>
<dbReference type="GeneID" id="828731"/>
<dbReference type="Gramene" id="AT4G26250.1">
    <property type="protein sequence ID" value="AT4G26250.1"/>
    <property type="gene ID" value="AT4G26250"/>
</dbReference>
<dbReference type="KEGG" id="ath:AT4G26250"/>
<dbReference type="Araport" id="AT4G26250"/>
<dbReference type="TAIR" id="AT4G26250">
    <property type="gene designation" value="GOLS6"/>
</dbReference>
<dbReference type="eggNOG" id="KOG1950">
    <property type="taxonomic scope" value="Eukaryota"/>
</dbReference>
<dbReference type="HOGENOM" id="CLU_049943_3_0_1"/>
<dbReference type="InParanoid" id="Q8H1S1"/>
<dbReference type="OMA" id="MASMEMI"/>
<dbReference type="PhylomeDB" id="Q8H1S1"/>
<dbReference type="PRO" id="PR:Q8H1S1"/>
<dbReference type="Proteomes" id="UP000006548">
    <property type="component" value="Chromosome 4"/>
</dbReference>
<dbReference type="ExpressionAtlas" id="Q8H1S1">
    <property type="expression patterns" value="baseline and differential"/>
</dbReference>
<dbReference type="GO" id="GO:0005737">
    <property type="term" value="C:cytoplasm"/>
    <property type="evidence" value="ECO:0007669"/>
    <property type="project" value="UniProtKB-SubCell"/>
</dbReference>
<dbReference type="GO" id="GO:0047216">
    <property type="term" value="F:inositol 3-alpha-galactosyltransferase activity"/>
    <property type="evidence" value="ECO:0000250"/>
    <property type="project" value="UniProtKB"/>
</dbReference>
<dbReference type="GO" id="GO:0046872">
    <property type="term" value="F:metal ion binding"/>
    <property type="evidence" value="ECO:0007669"/>
    <property type="project" value="UniProtKB-KW"/>
</dbReference>
<dbReference type="GO" id="GO:0006012">
    <property type="term" value="P:galactose metabolic process"/>
    <property type="evidence" value="ECO:0000250"/>
    <property type="project" value="UniProtKB"/>
</dbReference>
<dbReference type="CDD" id="cd02537">
    <property type="entry name" value="GT8_Glycogenin"/>
    <property type="match status" value="1"/>
</dbReference>
<dbReference type="FunFam" id="3.90.550.10:FF:000049">
    <property type="entry name" value="Hexosyltransferase"/>
    <property type="match status" value="1"/>
</dbReference>
<dbReference type="Gene3D" id="3.90.550.10">
    <property type="entry name" value="Spore Coat Polysaccharide Biosynthesis Protein SpsA, Chain A"/>
    <property type="match status" value="1"/>
</dbReference>
<dbReference type="InterPro" id="IPR002495">
    <property type="entry name" value="Glyco_trans_8"/>
</dbReference>
<dbReference type="InterPro" id="IPR050587">
    <property type="entry name" value="GNT1/Glycosyltrans_8"/>
</dbReference>
<dbReference type="InterPro" id="IPR029044">
    <property type="entry name" value="Nucleotide-diphossugar_trans"/>
</dbReference>
<dbReference type="PANTHER" id="PTHR11183">
    <property type="entry name" value="GLYCOGENIN SUBFAMILY MEMBER"/>
    <property type="match status" value="1"/>
</dbReference>
<dbReference type="Pfam" id="PF01501">
    <property type="entry name" value="Glyco_transf_8"/>
    <property type="match status" value="1"/>
</dbReference>
<dbReference type="SUPFAM" id="SSF53448">
    <property type="entry name" value="Nucleotide-diphospho-sugar transferases"/>
    <property type="match status" value="1"/>
</dbReference>
<feature type="chain" id="PRO_0000418662" description="Galactinol synthase 6">
    <location>
        <begin position="1"/>
        <end position="336"/>
    </location>
</feature>
<feature type="active site" evidence="1">
    <location>
        <position position="106"/>
    </location>
</feature>
<feature type="binding site" evidence="1">
    <location>
        <position position="122"/>
    </location>
    <ligand>
        <name>Mn(2+)</name>
        <dbReference type="ChEBI" id="CHEBI:29035"/>
    </ligand>
</feature>
<feature type="binding site" evidence="1">
    <location>
        <position position="124"/>
    </location>
    <ligand>
        <name>Mn(2+)</name>
        <dbReference type="ChEBI" id="CHEBI:29035"/>
    </ligand>
</feature>
<feature type="binding site" evidence="1">
    <location>
        <position position="260"/>
    </location>
    <ligand>
        <name>Mn(2+)</name>
        <dbReference type="ChEBI" id="CHEBI:29035"/>
    </ligand>
</feature>
<sequence length="336" mass="38851">MAQMSMTVEKSIKADVTVSHDRVKRAYVTFLAGNKDYWMGVVGLAKGLRKVKSAYPLVVAILPDVPEEHRQILLAQGCIIREIEPVYPPENKTGYSMAYYVINYSKLRIWEFVEYEKMIYLDGDIQVFSNIDHLFDTPRGYLYAVKDCFCEISWSKTPQFKIGYCQQCPEKVTWPVESLGSPPPVYFNAGMLVFEPNLLTYEDLLRVVQITTPTYFAEQDFLNEYFTDIYKPIPSTYNLVMAMLWRHPEHIDLDQISVIHYCANGSKPWRFDETEEHMDREDIKMLVKKWWDIYEDSSLDYKNFVETESKLSPINATLASKESVGDVLISLAPSAA</sequence>
<keyword id="KW-0119">Carbohydrate metabolism</keyword>
<keyword id="KW-0963">Cytoplasm</keyword>
<keyword id="KW-0299">Galactose metabolism</keyword>
<keyword id="KW-0328">Glycosyltransferase</keyword>
<keyword id="KW-0464">Manganese</keyword>
<keyword id="KW-0479">Metal-binding</keyword>
<keyword id="KW-1185">Reference proteome</keyword>
<keyword id="KW-0808">Transferase</keyword>
<accession>Q8H1S1</accession>
<accession>Q9STQ9</accession>
<comment type="function">
    <text evidence="1">Galactinol synthase involved in the biosynthesis of raffinose family oligosaccharides (RFOs) that function as osmoprotectants. May promote plant stress tolerance (By similarity).</text>
</comment>
<comment type="catalytic activity">
    <reaction>
        <text>myo-inositol + UDP-alpha-D-galactose = alpha-D-galactosyl-(1-&gt;3)-1D-myo-inositol + UDP + H(+)</text>
        <dbReference type="Rhea" id="RHEA:12464"/>
        <dbReference type="ChEBI" id="CHEBI:15378"/>
        <dbReference type="ChEBI" id="CHEBI:17268"/>
        <dbReference type="ChEBI" id="CHEBI:17505"/>
        <dbReference type="ChEBI" id="CHEBI:58223"/>
        <dbReference type="ChEBI" id="CHEBI:66914"/>
        <dbReference type="EC" id="2.4.1.123"/>
    </reaction>
</comment>
<comment type="cofactor">
    <cofactor evidence="1">
        <name>a divalent metal cation</name>
        <dbReference type="ChEBI" id="CHEBI:60240"/>
    </cofactor>
</comment>
<comment type="subcellular location">
    <subcellularLocation>
        <location evidence="2">Cytoplasm</location>
    </subcellularLocation>
</comment>
<comment type="similarity">
    <text evidence="2">Belongs to the glycosyltransferase 8 family. Galactosyltransferase subfamily.</text>
</comment>
<comment type="sequence caution" evidence="2">
    <conflict type="erroneous gene model prediction">
        <sequence resource="EMBL-CDS" id="CAB38954"/>
    </conflict>
</comment>
<comment type="sequence caution" evidence="2">
    <conflict type="erroneous gene model prediction">
        <sequence resource="EMBL-CDS" id="CAB79480"/>
    </conflict>
</comment>
<gene>
    <name type="primary">GOLS6</name>
    <name type="ordered locus">At4g26250</name>
    <name type="ORF">T25K17.60</name>
</gene>
<organism>
    <name type="scientific">Arabidopsis thaliana</name>
    <name type="common">Mouse-ear cress</name>
    <dbReference type="NCBI Taxonomy" id="3702"/>
    <lineage>
        <taxon>Eukaryota</taxon>
        <taxon>Viridiplantae</taxon>
        <taxon>Streptophyta</taxon>
        <taxon>Embryophyta</taxon>
        <taxon>Tracheophyta</taxon>
        <taxon>Spermatophyta</taxon>
        <taxon>Magnoliopsida</taxon>
        <taxon>eudicotyledons</taxon>
        <taxon>Gunneridae</taxon>
        <taxon>Pentapetalae</taxon>
        <taxon>rosids</taxon>
        <taxon>malvids</taxon>
        <taxon>Brassicales</taxon>
        <taxon>Brassicaceae</taxon>
        <taxon>Camelineae</taxon>
        <taxon>Arabidopsis</taxon>
    </lineage>
</organism>
<reference key="1">
    <citation type="journal article" date="1999" name="Nature">
        <title>Sequence and analysis of chromosome 4 of the plant Arabidopsis thaliana.</title>
        <authorList>
            <person name="Mayer K.F.X."/>
            <person name="Schueller C."/>
            <person name="Wambutt R."/>
            <person name="Murphy G."/>
            <person name="Volckaert G."/>
            <person name="Pohl T."/>
            <person name="Duesterhoeft A."/>
            <person name="Stiekema W."/>
            <person name="Entian K.-D."/>
            <person name="Terryn N."/>
            <person name="Harris B."/>
            <person name="Ansorge W."/>
            <person name="Brandt P."/>
            <person name="Grivell L.A."/>
            <person name="Rieger M."/>
            <person name="Weichselgartner M."/>
            <person name="de Simone V."/>
            <person name="Obermaier B."/>
            <person name="Mache R."/>
            <person name="Mueller M."/>
            <person name="Kreis M."/>
            <person name="Delseny M."/>
            <person name="Puigdomenech P."/>
            <person name="Watson M."/>
            <person name="Schmidtheini T."/>
            <person name="Reichert B."/>
            <person name="Portetelle D."/>
            <person name="Perez-Alonso M."/>
            <person name="Boutry M."/>
            <person name="Bancroft I."/>
            <person name="Vos P."/>
            <person name="Hoheisel J."/>
            <person name="Zimmermann W."/>
            <person name="Wedler H."/>
            <person name="Ridley P."/>
            <person name="Langham S.-A."/>
            <person name="McCullagh B."/>
            <person name="Bilham L."/>
            <person name="Robben J."/>
            <person name="van der Schueren J."/>
            <person name="Grymonprez B."/>
            <person name="Chuang Y.-J."/>
            <person name="Vandenbussche F."/>
            <person name="Braeken M."/>
            <person name="Weltjens I."/>
            <person name="Voet M."/>
            <person name="Bastiaens I."/>
            <person name="Aert R."/>
            <person name="Defoor E."/>
            <person name="Weitzenegger T."/>
            <person name="Bothe G."/>
            <person name="Ramsperger U."/>
            <person name="Hilbert H."/>
            <person name="Braun M."/>
            <person name="Holzer E."/>
            <person name="Brandt A."/>
            <person name="Peters S."/>
            <person name="van Staveren M."/>
            <person name="Dirkse W."/>
            <person name="Mooijman P."/>
            <person name="Klein Lankhorst R."/>
            <person name="Rose M."/>
            <person name="Hauf J."/>
            <person name="Koetter P."/>
            <person name="Berneiser S."/>
            <person name="Hempel S."/>
            <person name="Feldpausch M."/>
            <person name="Lamberth S."/>
            <person name="Van den Daele H."/>
            <person name="De Keyser A."/>
            <person name="Buysshaert C."/>
            <person name="Gielen J."/>
            <person name="Villarroel R."/>
            <person name="De Clercq R."/>
            <person name="van Montagu M."/>
            <person name="Rogers J."/>
            <person name="Cronin A."/>
            <person name="Quail M.A."/>
            <person name="Bray-Allen S."/>
            <person name="Clark L."/>
            <person name="Doggett J."/>
            <person name="Hall S."/>
            <person name="Kay M."/>
            <person name="Lennard N."/>
            <person name="McLay K."/>
            <person name="Mayes R."/>
            <person name="Pettett A."/>
            <person name="Rajandream M.A."/>
            <person name="Lyne M."/>
            <person name="Benes V."/>
            <person name="Rechmann S."/>
            <person name="Borkova D."/>
            <person name="Bloecker H."/>
            <person name="Scharfe M."/>
            <person name="Grimm M."/>
            <person name="Loehnert T.-H."/>
            <person name="Dose S."/>
            <person name="de Haan M."/>
            <person name="Maarse A.C."/>
            <person name="Schaefer M."/>
            <person name="Mueller-Auer S."/>
            <person name="Gabel C."/>
            <person name="Fuchs M."/>
            <person name="Fartmann B."/>
            <person name="Granderath K."/>
            <person name="Dauner D."/>
            <person name="Herzl A."/>
            <person name="Neumann S."/>
            <person name="Argiriou A."/>
            <person name="Vitale D."/>
            <person name="Liguori R."/>
            <person name="Piravandi E."/>
            <person name="Massenet O."/>
            <person name="Quigley F."/>
            <person name="Clabauld G."/>
            <person name="Muendlein A."/>
            <person name="Felber R."/>
            <person name="Schnabl S."/>
            <person name="Hiller R."/>
            <person name="Schmidt W."/>
            <person name="Lecharny A."/>
            <person name="Aubourg S."/>
            <person name="Chefdor F."/>
            <person name="Cooke R."/>
            <person name="Berger C."/>
            <person name="Monfort A."/>
            <person name="Casacuberta E."/>
            <person name="Gibbons T."/>
            <person name="Weber N."/>
            <person name="Vandenbol M."/>
            <person name="Bargues M."/>
            <person name="Terol J."/>
            <person name="Torres A."/>
            <person name="Perez-Perez A."/>
            <person name="Purnelle B."/>
            <person name="Bent E."/>
            <person name="Johnson S."/>
            <person name="Tacon D."/>
            <person name="Jesse T."/>
            <person name="Heijnen L."/>
            <person name="Schwarz S."/>
            <person name="Scholler P."/>
            <person name="Heber S."/>
            <person name="Francs P."/>
            <person name="Bielke C."/>
            <person name="Frishman D."/>
            <person name="Haase D."/>
            <person name="Lemcke K."/>
            <person name="Mewes H.-W."/>
            <person name="Stocker S."/>
            <person name="Zaccaria P."/>
            <person name="Bevan M."/>
            <person name="Wilson R.K."/>
            <person name="de la Bastide M."/>
            <person name="Habermann K."/>
            <person name="Parnell L."/>
            <person name="Dedhia N."/>
            <person name="Gnoj L."/>
            <person name="Schutz K."/>
            <person name="Huang E."/>
            <person name="Spiegel L."/>
            <person name="Sekhon M."/>
            <person name="Murray J."/>
            <person name="Sheet P."/>
            <person name="Cordes M."/>
            <person name="Abu-Threideh J."/>
            <person name="Stoneking T."/>
            <person name="Kalicki J."/>
            <person name="Graves T."/>
            <person name="Harmon G."/>
            <person name="Edwards J."/>
            <person name="Latreille P."/>
            <person name="Courtney L."/>
            <person name="Cloud J."/>
            <person name="Abbott A."/>
            <person name="Scott K."/>
            <person name="Johnson D."/>
            <person name="Minx P."/>
            <person name="Bentley D."/>
            <person name="Fulton B."/>
            <person name="Miller N."/>
            <person name="Greco T."/>
            <person name="Kemp K."/>
            <person name="Kramer J."/>
            <person name="Fulton L."/>
            <person name="Mardis E."/>
            <person name="Dante M."/>
            <person name="Pepin K."/>
            <person name="Hillier L.W."/>
            <person name="Nelson J."/>
            <person name="Spieth J."/>
            <person name="Ryan E."/>
            <person name="Andrews S."/>
            <person name="Geisel C."/>
            <person name="Layman D."/>
            <person name="Du H."/>
            <person name="Ali J."/>
            <person name="Berghoff A."/>
            <person name="Jones K."/>
            <person name="Drone K."/>
            <person name="Cotton M."/>
            <person name="Joshu C."/>
            <person name="Antonoiu B."/>
            <person name="Zidanic M."/>
            <person name="Strong C."/>
            <person name="Sun H."/>
            <person name="Lamar B."/>
            <person name="Yordan C."/>
            <person name="Ma P."/>
            <person name="Zhong J."/>
            <person name="Preston R."/>
            <person name="Vil D."/>
            <person name="Shekher M."/>
            <person name="Matero A."/>
            <person name="Shah R."/>
            <person name="Swaby I.K."/>
            <person name="O'Shaughnessy A."/>
            <person name="Rodriguez M."/>
            <person name="Hoffman J."/>
            <person name="Till S."/>
            <person name="Granat S."/>
            <person name="Shohdy N."/>
            <person name="Hasegawa A."/>
            <person name="Hameed A."/>
            <person name="Lodhi M."/>
            <person name="Johnson A."/>
            <person name="Chen E."/>
            <person name="Marra M.A."/>
            <person name="Martienssen R."/>
            <person name="McCombie W.R."/>
        </authorList>
    </citation>
    <scope>NUCLEOTIDE SEQUENCE [LARGE SCALE GENOMIC DNA]</scope>
    <source>
        <strain>cv. Columbia</strain>
    </source>
</reference>
<reference key="2">
    <citation type="journal article" date="2017" name="Plant J.">
        <title>Araport11: a complete reannotation of the Arabidopsis thaliana reference genome.</title>
        <authorList>
            <person name="Cheng C.Y."/>
            <person name="Krishnakumar V."/>
            <person name="Chan A.P."/>
            <person name="Thibaud-Nissen F."/>
            <person name="Schobel S."/>
            <person name="Town C.D."/>
        </authorList>
    </citation>
    <scope>GENOME REANNOTATION</scope>
    <source>
        <strain>cv. Columbia</strain>
    </source>
</reference>
<reference key="3">
    <citation type="journal article" date="2003" name="Science">
        <title>Empirical analysis of transcriptional activity in the Arabidopsis genome.</title>
        <authorList>
            <person name="Yamada K."/>
            <person name="Lim J."/>
            <person name="Dale J.M."/>
            <person name="Chen H."/>
            <person name="Shinn P."/>
            <person name="Palm C.J."/>
            <person name="Southwick A.M."/>
            <person name="Wu H.C."/>
            <person name="Kim C.J."/>
            <person name="Nguyen M."/>
            <person name="Pham P.K."/>
            <person name="Cheuk R.F."/>
            <person name="Karlin-Newmann G."/>
            <person name="Liu S.X."/>
            <person name="Lam B."/>
            <person name="Sakano H."/>
            <person name="Wu T."/>
            <person name="Yu G."/>
            <person name="Miranda M."/>
            <person name="Quach H.L."/>
            <person name="Tripp M."/>
            <person name="Chang C.H."/>
            <person name="Lee J.M."/>
            <person name="Toriumi M.J."/>
            <person name="Chan M.M."/>
            <person name="Tang C.C."/>
            <person name="Onodera C.S."/>
            <person name="Deng J.M."/>
            <person name="Akiyama K."/>
            <person name="Ansari Y."/>
            <person name="Arakawa T."/>
            <person name="Banh J."/>
            <person name="Banno F."/>
            <person name="Bowser L."/>
            <person name="Brooks S.Y."/>
            <person name="Carninci P."/>
            <person name="Chao Q."/>
            <person name="Choy N."/>
            <person name="Enju A."/>
            <person name="Goldsmith A.D."/>
            <person name="Gurjal M."/>
            <person name="Hansen N.F."/>
            <person name="Hayashizaki Y."/>
            <person name="Johnson-Hopson C."/>
            <person name="Hsuan V.W."/>
            <person name="Iida K."/>
            <person name="Karnes M."/>
            <person name="Khan S."/>
            <person name="Koesema E."/>
            <person name="Ishida J."/>
            <person name="Jiang P.X."/>
            <person name="Jones T."/>
            <person name="Kawai J."/>
            <person name="Kamiya A."/>
            <person name="Meyers C."/>
            <person name="Nakajima M."/>
            <person name="Narusaka M."/>
            <person name="Seki M."/>
            <person name="Sakurai T."/>
            <person name="Satou M."/>
            <person name="Tamse R."/>
            <person name="Vaysberg M."/>
            <person name="Wallender E.K."/>
            <person name="Wong C."/>
            <person name="Yamamura Y."/>
            <person name="Yuan S."/>
            <person name="Shinozaki K."/>
            <person name="Davis R.W."/>
            <person name="Theologis A."/>
            <person name="Ecker J.R."/>
        </authorList>
    </citation>
    <scope>NUCLEOTIDE SEQUENCE [LARGE SCALE MRNA]</scope>
    <source>
        <strain>cv. Columbia</strain>
    </source>
</reference>
<reference key="4">
    <citation type="journal article" date="2002" name="Plant J.">
        <title>Important roles of drought- and cold-inducible genes for galactinol synthase in stress tolerance in Arabidopsis thaliana.</title>
        <authorList>
            <person name="Taji T."/>
            <person name="Ohsumi C."/>
            <person name="Iuchi S."/>
            <person name="Seki M."/>
            <person name="Kasuga M."/>
            <person name="Kobayashi M."/>
            <person name="Yamaguchi-Shinozaki K."/>
            <person name="Shinozaki K."/>
        </authorList>
    </citation>
    <scope>GENE FAMILY</scope>
</reference>
<reference key="5">
    <citation type="journal article" date="2008" name="Plant Physiol.">
        <title>Galactinol and raffinose constitute a novel function to protect plants from oxidative damage.</title>
        <authorList>
            <person name="Nishizawa A."/>
            <person name="Yabuta Y."/>
            <person name="Shigeoka S."/>
        </authorList>
    </citation>
    <scope>GENE FAMILY</scope>
    <scope>NOMENCLATURE</scope>
</reference>
<protein>
    <recommendedName>
        <fullName>Galactinol synthase 6</fullName>
        <shortName>AtGolS6</shortName>
        <shortName>GolS-6</shortName>
        <ecNumber>2.4.1.123</ecNumber>
    </recommendedName>
</protein>